<accession>Q8FZV8</accession>
<accession>G0KB47</accession>
<protein>
    <recommendedName>
        <fullName evidence="1">Urease accessory protein UreD 2</fullName>
    </recommendedName>
</protein>
<proteinExistence type="inferred from homology"/>
<gene>
    <name evidence="1" type="primary">ureD2</name>
    <name type="synonym">ureD-2</name>
    <name type="ordered locus">BR1362</name>
    <name type="ordered locus">BS1330_I1357</name>
</gene>
<dbReference type="EMBL" id="AE014291">
    <property type="protein sequence ID" value="AAN30276.1"/>
    <property type="molecule type" value="Genomic_DNA"/>
</dbReference>
<dbReference type="EMBL" id="CP002997">
    <property type="protein sequence ID" value="AEM18693.1"/>
    <property type="molecule type" value="Genomic_DNA"/>
</dbReference>
<dbReference type="PIR" id="AE3332">
    <property type="entry name" value="AE3332"/>
</dbReference>
<dbReference type="RefSeq" id="WP_002967786.1">
    <property type="nucleotide sequence ID" value="NZ_KN046804.1"/>
</dbReference>
<dbReference type="SMR" id="Q8FZV8"/>
<dbReference type="GeneID" id="45052382"/>
<dbReference type="KEGG" id="bms:BR1362"/>
<dbReference type="KEGG" id="bsi:BS1330_I1357"/>
<dbReference type="PATRIC" id="fig|204722.21.peg.837"/>
<dbReference type="HOGENOM" id="CLU_056339_1_0_5"/>
<dbReference type="PhylomeDB" id="Q8FZV8"/>
<dbReference type="Proteomes" id="UP000007104">
    <property type="component" value="Chromosome I"/>
</dbReference>
<dbReference type="GO" id="GO:0005737">
    <property type="term" value="C:cytoplasm"/>
    <property type="evidence" value="ECO:0007669"/>
    <property type="project" value="UniProtKB-SubCell"/>
</dbReference>
<dbReference type="GO" id="GO:0016151">
    <property type="term" value="F:nickel cation binding"/>
    <property type="evidence" value="ECO:0007669"/>
    <property type="project" value="UniProtKB-UniRule"/>
</dbReference>
<dbReference type="HAMAP" id="MF_01384">
    <property type="entry name" value="UreD"/>
    <property type="match status" value="1"/>
</dbReference>
<dbReference type="InterPro" id="IPR002669">
    <property type="entry name" value="UreD"/>
</dbReference>
<dbReference type="PANTHER" id="PTHR33643">
    <property type="entry name" value="UREASE ACCESSORY PROTEIN D"/>
    <property type="match status" value="1"/>
</dbReference>
<dbReference type="PANTHER" id="PTHR33643:SF1">
    <property type="entry name" value="UREASE ACCESSORY PROTEIN D"/>
    <property type="match status" value="1"/>
</dbReference>
<dbReference type="Pfam" id="PF01774">
    <property type="entry name" value="UreD"/>
    <property type="match status" value="1"/>
</dbReference>
<sequence length="302" mass="33685">MLGKARELANYQDEPEQLPTGSFGKNAFLRLGFERRPERTVLATLHRRAPLIVQQALYWDEGMPTLPCVSIISNAGGILQGDRYAIEIDLEPDTQAHVTTQSATRIQEMDANFATQTQTITLGANSYLEYIPHPIIPHKHSRFVQQTEVTIHPTATLIYSEVLMAGRKYYGTGELFHYDLFSSKFHAAHTDGTSLFTEKFIVEPARGNVSRLGAMGSFHVFGNLILLTPKTHADRLFETIDPVFDMDEGIAWGASRLPNDAGLLFKVLGMESAPVRAAIRKIWEAARQEVTGASLPENFLWA</sequence>
<reference key="1">
    <citation type="journal article" date="2002" name="Proc. Natl. Acad. Sci. U.S.A.">
        <title>The Brucella suis genome reveals fundamental similarities between animal and plant pathogens and symbionts.</title>
        <authorList>
            <person name="Paulsen I.T."/>
            <person name="Seshadri R."/>
            <person name="Nelson K.E."/>
            <person name="Eisen J.A."/>
            <person name="Heidelberg J.F."/>
            <person name="Read T.D."/>
            <person name="Dodson R.J."/>
            <person name="Umayam L.A."/>
            <person name="Brinkac L.M."/>
            <person name="Beanan M.J."/>
            <person name="Daugherty S.C."/>
            <person name="DeBoy R.T."/>
            <person name="Durkin A.S."/>
            <person name="Kolonay J.F."/>
            <person name="Madupu R."/>
            <person name="Nelson W.C."/>
            <person name="Ayodeji B."/>
            <person name="Kraul M."/>
            <person name="Shetty J."/>
            <person name="Malek J.A."/>
            <person name="Van Aken S.E."/>
            <person name="Riedmuller S."/>
            <person name="Tettelin H."/>
            <person name="Gill S.R."/>
            <person name="White O."/>
            <person name="Salzberg S.L."/>
            <person name="Hoover D.L."/>
            <person name="Lindler L.E."/>
            <person name="Halling S.M."/>
            <person name="Boyle S.M."/>
            <person name="Fraser C.M."/>
        </authorList>
    </citation>
    <scope>NUCLEOTIDE SEQUENCE [LARGE SCALE GENOMIC DNA]</scope>
    <source>
        <strain>1330</strain>
    </source>
</reference>
<reference key="2">
    <citation type="journal article" date="2011" name="J. Bacteriol.">
        <title>Revised genome sequence of Brucella suis 1330.</title>
        <authorList>
            <person name="Tae H."/>
            <person name="Shallom S."/>
            <person name="Settlage R."/>
            <person name="Preston D."/>
            <person name="Adams L.G."/>
            <person name="Garner H.R."/>
        </authorList>
    </citation>
    <scope>NUCLEOTIDE SEQUENCE [LARGE SCALE GENOMIC DNA]</scope>
    <source>
        <strain>1330</strain>
    </source>
</reference>
<reference key="3">
    <citation type="journal article" date="2007" name="BMC Microbiol.">
        <title>Brucella suis urease encoded by ure1 but not ure2 is necessary for intestinal infection of BALB/c mice.</title>
        <authorList>
            <person name="Bandara A.B."/>
            <person name="Contreras A."/>
            <person name="Contreras-Rodriguez A."/>
            <person name="Martins A.M."/>
            <person name="Dobrean V."/>
            <person name="Poff-Reichow S."/>
            <person name="Rajasekaran P."/>
            <person name="Sriranganathan N."/>
            <person name="Schurig G.G."/>
            <person name="Boyle S.M."/>
        </authorList>
    </citation>
    <scope>OPERON DISRUPTION</scope>
    <scope>LACK OF ROLE IN VIRULENCE</scope>
    <source>
        <strain>1330</strain>
    </source>
</reference>
<evidence type="ECO:0000255" key="1">
    <source>
        <dbReference type="HAMAP-Rule" id="MF_01384"/>
    </source>
</evidence>
<keyword id="KW-0143">Chaperone</keyword>
<keyword id="KW-0963">Cytoplasm</keyword>
<keyword id="KW-0996">Nickel insertion</keyword>
<organism>
    <name type="scientific">Brucella suis biovar 1 (strain 1330)</name>
    <dbReference type="NCBI Taxonomy" id="204722"/>
    <lineage>
        <taxon>Bacteria</taxon>
        <taxon>Pseudomonadati</taxon>
        <taxon>Pseudomonadota</taxon>
        <taxon>Alphaproteobacteria</taxon>
        <taxon>Hyphomicrobiales</taxon>
        <taxon>Brucellaceae</taxon>
        <taxon>Brucella/Ochrobactrum group</taxon>
        <taxon>Brucella</taxon>
    </lineage>
</organism>
<name>URED2_BRUSU</name>
<feature type="chain" id="PRO_0000340428" description="Urease accessory protein UreD 2">
    <location>
        <begin position="1"/>
        <end position="302"/>
    </location>
</feature>
<comment type="function">
    <text evidence="1">Required for maturation of urease via the functional incorporation of the urease nickel metallocenter.</text>
</comment>
<comment type="function">
    <text>Disrupting the ure2 operon has no effect on urease activity, or pathogen survival in BALB/c mice when inoculated by gavage, but confers slightly enhanced resistance to low pH killing in vitro.</text>
</comment>
<comment type="subunit">
    <text evidence="1">UreD, UreF and UreG form a complex that acts as a GTP-hydrolysis-dependent molecular chaperone, activating the urease apoprotein by helping to assemble the nickel containing metallocenter of UreC. The UreE protein probably delivers the nickel.</text>
</comment>
<comment type="subcellular location">
    <subcellularLocation>
        <location evidence="1">Cytoplasm</location>
    </subcellularLocation>
</comment>
<comment type="similarity">
    <text evidence="1">Belongs to the UreD family.</text>
</comment>